<organism>
    <name type="scientific">Helicobacter pylori (strain ATCC 700392 / 26695)</name>
    <name type="common">Campylobacter pylori</name>
    <dbReference type="NCBI Taxonomy" id="85962"/>
    <lineage>
        <taxon>Bacteria</taxon>
        <taxon>Pseudomonadati</taxon>
        <taxon>Campylobacterota</taxon>
        <taxon>Epsilonproteobacteria</taxon>
        <taxon>Campylobacterales</taxon>
        <taxon>Helicobacteraceae</taxon>
        <taxon>Helicobacter</taxon>
    </lineage>
</organism>
<accession>P56111</accession>
<feature type="chain" id="PRO_0000103555" description="Phosphogluconate dehydratase">
    <location>
        <begin position="1"/>
        <end position="608"/>
    </location>
</feature>
<feature type="binding site" evidence="1">
    <location>
        <position position="154"/>
    </location>
    <ligand>
        <name>[4Fe-4S] cluster</name>
        <dbReference type="ChEBI" id="CHEBI:49883"/>
    </ligand>
</feature>
<feature type="binding site" evidence="1">
    <location>
        <position position="221"/>
    </location>
    <ligand>
        <name>[4Fe-4S] cluster</name>
        <dbReference type="ChEBI" id="CHEBI:49883"/>
    </ligand>
</feature>
<dbReference type="EC" id="4.2.1.12" evidence="1"/>
<dbReference type="EMBL" id="AE000511">
    <property type="protein sequence ID" value="AAD08143.1"/>
    <property type="molecule type" value="Genomic_DNA"/>
</dbReference>
<dbReference type="PIR" id="D64657">
    <property type="entry name" value="D64657"/>
</dbReference>
<dbReference type="RefSeq" id="NP_207891.1">
    <property type="nucleotide sequence ID" value="NC_000915.1"/>
</dbReference>
<dbReference type="RefSeq" id="WP_001124018.1">
    <property type="nucleotide sequence ID" value="NC_018939.1"/>
</dbReference>
<dbReference type="SMR" id="P56111"/>
<dbReference type="FunCoup" id="P56111">
    <property type="interactions" value="61"/>
</dbReference>
<dbReference type="IntAct" id="P56111">
    <property type="interactions" value="1"/>
</dbReference>
<dbReference type="MINT" id="P56111"/>
<dbReference type="STRING" id="85962.HP_1100"/>
<dbReference type="PaxDb" id="85962-C694_05675"/>
<dbReference type="EnsemblBacteria" id="AAD08143">
    <property type="protein sequence ID" value="AAD08143"/>
    <property type="gene ID" value="HP_1100"/>
</dbReference>
<dbReference type="KEGG" id="heo:C694_05675"/>
<dbReference type="KEGG" id="hpy:HP_1100"/>
<dbReference type="PATRIC" id="fig|85962.47.peg.1180"/>
<dbReference type="eggNOG" id="COG0129">
    <property type="taxonomic scope" value="Bacteria"/>
</dbReference>
<dbReference type="InParanoid" id="P56111"/>
<dbReference type="OrthoDB" id="9807077at2"/>
<dbReference type="PhylomeDB" id="P56111"/>
<dbReference type="UniPathway" id="UPA00226"/>
<dbReference type="Proteomes" id="UP000000429">
    <property type="component" value="Chromosome"/>
</dbReference>
<dbReference type="GO" id="GO:0005829">
    <property type="term" value="C:cytosol"/>
    <property type="evidence" value="ECO:0000318"/>
    <property type="project" value="GO_Central"/>
</dbReference>
<dbReference type="GO" id="GO:0051539">
    <property type="term" value="F:4 iron, 4 sulfur cluster binding"/>
    <property type="evidence" value="ECO:0007669"/>
    <property type="project" value="UniProtKB-UniRule"/>
</dbReference>
<dbReference type="GO" id="GO:0016836">
    <property type="term" value="F:hydro-lyase activity"/>
    <property type="evidence" value="ECO:0000318"/>
    <property type="project" value="GO_Central"/>
</dbReference>
<dbReference type="GO" id="GO:0046872">
    <property type="term" value="F:metal ion binding"/>
    <property type="evidence" value="ECO:0007669"/>
    <property type="project" value="UniProtKB-KW"/>
</dbReference>
<dbReference type="GO" id="GO:0004456">
    <property type="term" value="F:phosphogluconate dehydratase activity"/>
    <property type="evidence" value="ECO:0007669"/>
    <property type="project" value="UniProtKB-UniRule"/>
</dbReference>
<dbReference type="GO" id="GO:0019521">
    <property type="term" value="P:D-gluconate metabolic process"/>
    <property type="evidence" value="ECO:0007669"/>
    <property type="project" value="UniProtKB-KW"/>
</dbReference>
<dbReference type="GO" id="GO:0009255">
    <property type="term" value="P:Entner-Doudoroff pathway through 6-phosphogluconate"/>
    <property type="evidence" value="ECO:0007669"/>
    <property type="project" value="UniProtKB-UniRule"/>
</dbReference>
<dbReference type="Gene3D" id="3.50.30.80">
    <property type="entry name" value="IlvD/EDD C-terminal domain-like"/>
    <property type="match status" value="1"/>
</dbReference>
<dbReference type="HAMAP" id="MF_02094">
    <property type="entry name" value="Edd"/>
    <property type="match status" value="1"/>
</dbReference>
<dbReference type="InterPro" id="IPR004786">
    <property type="entry name" value="6-phosphgluc_deHydtase"/>
</dbReference>
<dbReference type="InterPro" id="IPR042096">
    <property type="entry name" value="Dihydro-acid_dehy_C"/>
</dbReference>
<dbReference type="InterPro" id="IPR020558">
    <property type="entry name" value="DiOHA_6PGluconate_deHydtase_CS"/>
</dbReference>
<dbReference type="InterPro" id="IPR056740">
    <property type="entry name" value="ILV_EDD_C"/>
</dbReference>
<dbReference type="InterPro" id="IPR000581">
    <property type="entry name" value="ILV_EDD_N"/>
</dbReference>
<dbReference type="InterPro" id="IPR037237">
    <property type="entry name" value="IlvD/EDD_N"/>
</dbReference>
<dbReference type="NCBIfam" id="TIGR01196">
    <property type="entry name" value="edd"/>
    <property type="match status" value="1"/>
</dbReference>
<dbReference type="PANTHER" id="PTHR43661">
    <property type="entry name" value="D-XYLONATE DEHYDRATASE"/>
    <property type="match status" value="1"/>
</dbReference>
<dbReference type="PANTHER" id="PTHR43661:SF1">
    <property type="entry name" value="PHOSPHOGLUCONATE DEHYDRATASE"/>
    <property type="match status" value="1"/>
</dbReference>
<dbReference type="Pfam" id="PF24877">
    <property type="entry name" value="ILV_EDD_C"/>
    <property type="match status" value="1"/>
</dbReference>
<dbReference type="Pfam" id="PF00920">
    <property type="entry name" value="ILVD_EDD_N"/>
    <property type="match status" value="1"/>
</dbReference>
<dbReference type="SUPFAM" id="SSF143975">
    <property type="entry name" value="IlvD/EDD N-terminal domain-like"/>
    <property type="match status" value="1"/>
</dbReference>
<dbReference type="SUPFAM" id="SSF52016">
    <property type="entry name" value="LeuD/IlvD-like"/>
    <property type="match status" value="1"/>
</dbReference>
<dbReference type="PROSITE" id="PS00886">
    <property type="entry name" value="ILVD_EDD_1"/>
    <property type="match status" value="1"/>
</dbReference>
<dbReference type="PROSITE" id="PS00887">
    <property type="entry name" value="ILVD_EDD_2"/>
    <property type="match status" value="1"/>
</dbReference>
<name>EDD_HELPY</name>
<protein>
    <recommendedName>
        <fullName evidence="1">Phosphogluconate dehydratase</fullName>
        <ecNumber evidence="1">4.2.1.12</ecNumber>
    </recommendedName>
</protein>
<proteinExistence type="inferred from homology"/>
<keyword id="KW-0004">4Fe-4S</keyword>
<keyword id="KW-0119">Carbohydrate metabolism</keyword>
<keyword id="KW-0311">Gluconate utilization</keyword>
<keyword id="KW-0408">Iron</keyword>
<keyword id="KW-0411">Iron-sulfur</keyword>
<keyword id="KW-0456">Lyase</keyword>
<keyword id="KW-0479">Metal-binding</keyword>
<keyword id="KW-1185">Reference proteome</keyword>
<sequence length="608" mass="66655">MPKHSLEQIKEKITERSKKTRELYLENIFNPKNQPKIESLGCANIAHVTASMPEHLKMPLGSHKRKHFAIITAYNDMLSAHQPFKNYPDLIKKELQEHNAYASVASGVPAMCDGITQGYDGMELSLFSRDVIALSTAVGLSHNVFDGAFFLGVCDKIVPGLLIGALSFGNLASVFVPSGPMVSGIENYKKAKARQDFAMGKINREELLKVEMQSYHDVGTCTFYGTANSNQMMMEFMGLHVANSSFINPNNPLRKVLVEESAKRLASGKVLPLAKLIDEKSILNALIGLMATGGSTNHTLHLIAIARSCGVILNWDDFDAVSNLIPLLAKVYPNGSADVNAFEACGGLVFVIKELLKEGLLFEDTHTIMDTETQKGMQNYTKTPFLENNQLVYKDAINHSLNTDILRPVSDPFAANGGLKILKGNLGRAVIKISAIKDEHRKVKARAIVFKTQSEFLERFKNKELERDFVAVLPFQGPKSNGMPELHKLTTNLGALQDMGYKVALVTDGRMSGASGKVPSAIHLSPEGALNGAIIKIKDGDLIELDAPNNALNVLEKDFEKRGINPLFLETLENLEKPSFGLGRELFTSLRLNVNTAEEGGMSFGIKV</sequence>
<gene>
    <name evidence="1" type="primary">edd</name>
    <name type="ordered locus">HP_1100</name>
</gene>
<evidence type="ECO:0000255" key="1">
    <source>
        <dbReference type="HAMAP-Rule" id="MF_02094"/>
    </source>
</evidence>
<evidence type="ECO:0000305" key="2"/>
<comment type="function">
    <text evidence="1">Catalyzes the dehydration of 6-phospho-D-gluconate to 2-dehydro-3-deoxy-6-phospho-D-gluconate.</text>
</comment>
<comment type="catalytic activity">
    <reaction evidence="1">
        <text>6-phospho-D-gluconate = 2-dehydro-3-deoxy-6-phospho-D-gluconate + H2O</text>
        <dbReference type="Rhea" id="RHEA:17277"/>
        <dbReference type="ChEBI" id="CHEBI:15377"/>
        <dbReference type="ChEBI" id="CHEBI:57569"/>
        <dbReference type="ChEBI" id="CHEBI:58759"/>
        <dbReference type="EC" id="4.2.1.12"/>
    </reaction>
</comment>
<comment type="cofactor">
    <cofactor evidence="1">
        <name>[4Fe-4S] cluster</name>
        <dbReference type="ChEBI" id="CHEBI:49883"/>
    </cofactor>
    <text evidence="1">Binds 1 [4Fe-4S] cluster.</text>
</comment>
<comment type="pathway">
    <text evidence="1">Carbohydrate metabolism; Entner-Doudoroff pathway.</text>
</comment>
<comment type="similarity">
    <text evidence="1 2">Belongs to the IlvD/Edd family.</text>
</comment>
<reference key="1">
    <citation type="journal article" date="1997" name="Nature">
        <title>The complete genome sequence of the gastric pathogen Helicobacter pylori.</title>
        <authorList>
            <person name="Tomb J.-F."/>
            <person name="White O."/>
            <person name="Kerlavage A.R."/>
            <person name="Clayton R.A."/>
            <person name="Sutton G.G."/>
            <person name="Fleischmann R.D."/>
            <person name="Ketchum K.A."/>
            <person name="Klenk H.-P."/>
            <person name="Gill S.R."/>
            <person name="Dougherty B.A."/>
            <person name="Nelson K.E."/>
            <person name="Quackenbush J."/>
            <person name="Zhou L."/>
            <person name="Kirkness E.F."/>
            <person name="Peterson S.N."/>
            <person name="Loftus B.J."/>
            <person name="Richardson D.L."/>
            <person name="Dodson R.J."/>
            <person name="Khalak H.G."/>
            <person name="Glodek A."/>
            <person name="McKenney K."/>
            <person name="FitzGerald L.M."/>
            <person name="Lee N."/>
            <person name="Adams M.D."/>
            <person name="Hickey E.K."/>
            <person name="Berg D.E."/>
            <person name="Gocayne J.D."/>
            <person name="Utterback T.R."/>
            <person name="Peterson J.D."/>
            <person name="Kelley J.M."/>
            <person name="Cotton M.D."/>
            <person name="Weidman J.F."/>
            <person name="Fujii C."/>
            <person name="Bowman C."/>
            <person name="Watthey L."/>
            <person name="Wallin E."/>
            <person name="Hayes W.S."/>
            <person name="Borodovsky M."/>
            <person name="Karp P.D."/>
            <person name="Smith H.O."/>
            <person name="Fraser C.M."/>
            <person name="Venter J.C."/>
        </authorList>
    </citation>
    <scope>NUCLEOTIDE SEQUENCE [LARGE SCALE GENOMIC DNA]</scope>
    <source>
        <strain>ATCC 700392 / 26695</strain>
    </source>
</reference>